<comment type="catalytic activity">
    <reaction evidence="1">
        <text>a plastoquinone + NADH + (n+1) H(+)(in) = a plastoquinol + NAD(+) + n H(+)(out)</text>
        <dbReference type="Rhea" id="RHEA:42608"/>
        <dbReference type="Rhea" id="RHEA-COMP:9561"/>
        <dbReference type="Rhea" id="RHEA-COMP:9562"/>
        <dbReference type="ChEBI" id="CHEBI:15378"/>
        <dbReference type="ChEBI" id="CHEBI:17757"/>
        <dbReference type="ChEBI" id="CHEBI:57540"/>
        <dbReference type="ChEBI" id="CHEBI:57945"/>
        <dbReference type="ChEBI" id="CHEBI:62192"/>
    </reaction>
</comment>
<comment type="catalytic activity">
    <reaction evidence="1">
        <text>a plastoquinone + NADPH + (n+1) H(+)(in) = a plastoquinol + NADP(+) + n H(+)(out)</text>
        <dbReference type="Rhea" id="RHEA:42612"/>
        <dbReference type="Rhea" id="RHEA-COMP:9561"/>
        <dbReference type="Rhea" id="RHEA-COMP:9562"/>
        <dbReference type="ChEBI" id="CHEBI:15378"/>
        <dbReference type="ChEBI" id="CHEBI:17757"/>
        <dbReference type="ChEBI" id="CHEBI:57783"/>
        <dbReference type="ChEBI" id="CHEBI:58349"/>
        <dbReference type="ChEBI" id="CHEBI:62192"/>
    </reaction>
</comment>
<comment type="subcellular location">
    <subcellularLocation>
        <location evidence="1">Plastid</location>
        <location evidence="1">Chloroplast thylakoid membrane</location>
        <topology evidence="1">Multi-pass membrane protein</topology>
    </subcellularLocation>
</comment>
<comment type="similarity">
    <text evidence="1">Belongs to the complex I subunit 4 family.</text>
</comment>
<keyword id="KW-0150">Chloroplast</keyword>
<keyword id="KW-0472">Membrane</keyword>
<keyword id="KW-0520">NAD</keyword>
<keyword id="KW-0521">NADP</keyword>
<keyword id="KW-0934">Plastid</keyword>
<keyword id="KW-0618">Plastoquinone</keyword>
<keyword id="KW-0874">Quinone</keyword>
<keyword id="KW-0793">Thylakoid</keyword>
<keyword id="KW-1278">Translocase</keyword>
<keyword id="KW-0812">Transmembrane</keyword>
<keyword id="KW-1133">Transmembrane helix</keyword>
<sequence>MSYFPWLTIIVLFPISAGSFIFFLPYKGNKVIRWYTIGICLLELLLITYAFCYFFQLDDPLIQLEEDYKWINFFDFHWRLGIDGLSIGPILLTGFITTLATLAAWPVTQDSRLFHFLMLAMYSGQIGLFSSRDLLLFFIMWELELIPVYLLLSMWGGKKRLYSATKFILYTAGGSIFLLMGVLGMGLYGSNEPILNFETSANQSYPMALEILFYFGFLIAYAVKLPIIPLHTWLPDTHGEAHYSTCMLLAGILLKMGAYGLIRINMELLPHAHSIFSPWLMIVGTVQIIYAASTSFGQRNLKKRIAYSSVSHMGFIIIGICSITDTGLNGAVLQIISHGFIGAALFFLAGTSYDRIRIVYLDEMGGIAIPMPKIFTMFSSFSMASLALPGMSGFVAELIVFFGIITSPKYLLMPKVLITFVMAIGIILTPIYSLSMLRQMFYGYKLFNVPNSYFVDSGPRELFISICILLPVIGIGIYPDFVLSLLGDKVEDILSNYFQR</sequence>
<accession>A8SEF4</accession>
<organism>
    <name type="scientific">Ceratophyllum demersum</name>
    <name type="common">Rigid hornwort</name>
    <name type="synonym">Coontail</name>
    <dbReference type="NCBI Taxonomy" id="4428"/>
    <lineage>
        <taxon>Eukaryota</taxon>
        <taxon>Viridiplantae</taxon>
        <taxon>Streptophyta</taxon>
        <taxon>Embryophyta</taxon>
        <taxon>Tracheophyta</taxon>
        <taxon>Spermatophyta</taxon>
        <taxon>Magnoliopsida</taxon>
        <taxon>Ceratophyllales</taxon>
        <taxon>Ceratophyllaceae</taxon>
        <taxon>Ceratophyllum</taxon>
    </lineage>
</organism>
<feature type="chain" id="PRO_0000343276" description="NAD(P)H-quinone oxidoreductase chain 4, chloroplastic">
    <location>
        <begin position="1"/>
        <end position="500"/>
    </location>
</feature>
<feature type="transmembrane region" description="Helical" evidence="1">
    <location>
        <begin position="4"/>
        <end position="24"/>
    </location>
</feature>
<feature type="transmembrane region" description="Helical" evidence="1">
    <location>
        <begin position="37"/>
        <end position="57"/>
    </location>
</feature>
<feature type="transmembrane region" description="Helical" evidence="1">
    <location>
        <begin position="87"/>
        <end position="107"/>
    </location>
</feature>
<feature type="transmembrane region" description="Helical" evidence="1">
    <location>
        <begin position="113"/>
        <end position="130"/>
    </location>
</feature>
<feature type="transmembrane region" description="Helical" evidence="1">
    <location>
        <begin position="134"/>
        <end position="154"/>
    </location>
</feature>
<feature type="transmembrane region" description="Helical" evidence="1">
    <location>
        <begin position="167"/>
        <end position="187"/>
    </location>
</feature>
<feature type="transmembrane region" description="Helical" evidence="1">
    <location>
        <begin position="208"/>
        <end position="228"/>
    </location>
</feature>
<feature type="transmembrane region" description="Helical" evidence="1">
    <location>
        <begin position="242"/>
        <end position="262"/>
    </location>
</feature>
<feature type="transmembrane region" description="Helical" evidence="1">
    <location>
        <begin position="272"/>
        <end position="292"/>
    </location>
</feature>
<feature type="transmembrane region" description="Helical" evidence="1">
    <location>
        <begin position="305"/>
        <end position="325"/>
    </location>
</feature>
<feature type="transmembrane region" description="Helical" evidence="1">
    <location>
        <begin position="330"/>
        <end position="350"/>
    </location>
</feature>
<feature type="transmembrane region" description="Helical" evidence="1">
    <location>
        <begin position="386"/>
        <end position="406"/>
    </location>
</feature>
<feature type="transmembrane region" description="Helical" evidence="1">
    <location>
        <begin position="416"/>
        <end position="436"/>
    </location>
</feature>
<feature type="transmembrane region" description="Helical" evidence="1">
    <location>
        <begin position="462"/>
        <end position="482"/>
    </location>
</feature>
<evidence type="ECO:0000255" key="1">
    <source>
        <dbReference type="HAMAP-Rule" id="MF_00491"/>
    </source>
</evidence>
<reference key="1">
    <citation type="journal article" date="2007" name="Proc. Natl. Acad. Sci. U.S.A.">
        <title>Using plastid genome-scale data to resolve enigmatic relationships among basal angiosperms.</title>
        <authorList>
            <person name="Moore M.J."/>
            <person name="Bell C.D."/>
            <person name="Soltis P.S."/>
            <person name="Soltis D.E."/>
        </authorList>
    </citation>
    <scope>NUCLEOTIDE SEQUENCE [LARGE SCALE GENOMIC DNA]</scope>
</reference>
<dbReference type="EC" id="7.1.1.-" evidence="1"/>
<dbReference type="EMBL" id="EF614270">
    <property type="protein sequence ID" value="ABQ81501.1"/>
    <property type="molecule type" value="Genomic_DNA"/>
</dbReference>
<dbReference type="RefSeq" id="YP_001542497.1">
    <property type="nucleotide sequence ID" value="NC_009962.1"/>
</dbReference>
<dbReference type="SMR" id="A8SEF4"/>
<dbReference type="GeneID" id="5729455"/>
<dbReference type="GO" id="GO:0009535">
    <property type="term" value="C:chloroplast thylakoid membrane"/>
    <property type="evidence" value="ECO:0007669"/>
    <property type="project" value="UniProtKB-SubCell"/>
</dbReference>
<dbReference type="GO" id="GO:0008137">
    <property type="term" value="F:NADH dehydrogenase (ubiquinone) activity"/>
    <property type="evidence" value="ECO:0007669"/>
    <property type="project" value="InterPro"/>
</dbReference>
<dbReference type="GO" id="GO:0048039">
    <property type="term" value="F:ubiquinone binding"/>
    <property type="evidence" value="ECO:0007669"/>
    <property type="project" value="TreeGrafter"/>
</dbReference>
<dbReference type="GO" id="GO:0042773">
    <property type="term" value="P:ATP synthesis coupled electron transport"/>
    <property type="evidence" value="ECO:0007669"/>
    <property type="project" value="InterPro"/>
</dbReference>
<dbReference type="GO" id="GO:0015990">
    <property type="term" value="P:electron transport coupled proton transport"/>
    <property type="evidence" value="ECO:0007669"/>
    <property type="project" value="TreeGrafter"/>
</dbReference>
<dbReference type="HAMAP" id="MF_00491">
    <property type="entry name" value="NDH1_NuoM"/>
    <property type="match status" value="1"/>
</dbReference>
<dbReference type="InterPro" id="IPR022997">
    <property type="entry name" value="NADH_Q_OxRdtase_chain4"/>
</dbReference>
<dbReference type="InterPro" id="IPR010227">
    <property type="entry name" value="NADH_Q_OxRdtase_chainM/4"/>
</dbReference>
<dbReference type="InterPro" id="IPR003918">
    <property type="entry name" value="NADH_UbQ_OxRdtase"/>
</dbReference>
<dbReference type="InterPro" id="IPR001750">
    <property type="entry name" value="ND/Mrp_TM"/>
</dbReference>
<dbReference type="NCBIfam" id="TIGR01972">
    <property type="entry name" value="NDH_I_M"/>
    <property type="match status" value="1"/>
</dbReference>
<dbReference type="PANTHER" id="PTHR43507:SF21">
    <property type="entry name" value="NAD(P)H-QUINONE OXIDOREDUCTASE CHAIN 4, CHLOROPLASTIC"/>
    <property type="match status" value="1"/>
</dbReference>
<dbReference type="PANTHER" id="PTHR43507">
    <property type="entry name" value="NADH-UBIQUINONE OXIDOREDUCTASE CHAIN 4"/>
    <property type="match status" value="1"/>
</dbReference>
<dbReference type="Pfam" id="PF00361">
    <property type="entry name" value="Proton_antipo_M"/>
    <property type="match status" value="1"/>
</dbReference>
<dbReference type="PRINTS" id="PR01437">
    <property type="entry name" value="NUOXDRDTASE4"/>
</dbReference>
<name>NU4C_CERDE</name>
<geneLocation type="chloroplast"/>
<protein>
    <recommendedName>
        <fullName evidence="1">NAD(P)H-quinone oxidoreductase chain 4, chloroplastic</fullName>
        <ecNumber evidence="1">7.1.1.-</ecNumber>
    </recommendedName>
    <alternativeName>
        <fullName evidence="1">NAD(P)H dehydrogenase, chain 4</fullName>
    </alternativeName>
    <alternativeName>
        <fullName evidence="1">NADH-plastoquinone oxidoreductase chain 4</fullName>
    </alternativeName>
</protein>
<proteinExistence type="inferred from homology"/>
<gene>
    <name evidence="1" type="primary">ndhD</name>
</gene>